<evidence type="ECO:0000255" key="1">
    <source>
        <dbReference type="HAMAP-Rule" id="MF_00550"/>
    </source>
</evidence>
<dbReference type="EC" id="3.4.11.4" evidence="1"/>
<dbReference type="EMBL" id="L42023">
    <property type="protein sequence ID" value="AAC22995.1"/>
    <property type="molecule type" value="Genomic_DNA"/>
</dbReference>
<dbReference type="PIR" id="C64118">
    <property type="entry name" value="C64118"/>
</dbReference>
<dbReference type="RefSeq" id="NP_439499.1">
    <property type="nucleotide sequence ID" value="NC_000907.1"/>
</dbReference>
<dbReference type="SMR" id="P45172"/>
<dbReference type="STRING" id="71421.HI_1348"/>
<dbReference type="MEROPS" id="M20.003"/>
<dbReference type="EnsemblBacteria" id="AAC22995">
    <property type="protein sequence ID" value="AAC22995"/>
    <property type="gene ID" value="HI_1348"/>
</dbReference>
<dbReference type="KEGG" id="hin:HI_1348"/>
<dbReference type="PATRIC" id="fig|71421.8.peg.1401"/>
<dbReference type="eggNOG" id="COG2195">
    <property type="taxonomic scope" value="Bacteria"/>
</dbReference>
<dbReference type="HOGENOM" id="CLU_053676_0_0_6"/>
<dbReference type="OrthoDB" id="9804934at2"/>
<dbReference type="PhylomeDB" id="P45172"/>
<dbReference type="BioCyc" id="HINF71421:G1GJ1-1373-MONOMER"/>
<dbReference type="Proteomes" id="UP000000579">
    <property type="component" value="Chromosome"/>
</dbReference>
<dbReference type="GO" id="GO:0005829">
    <property type="term" value="C:cytosol"/>
    <property type="evidence" value="ECO:0000318"/>
    <property type="project" value="GO_Central"/>
</dbReference>
<dbReference type="GO" id="GO:0008237">
    <property type="term" value="F:metallopeptidase activity"/>
    <property type="evidence" value="ECO:0007669"/>
    <property type="project" value="UniProtKB-KW"/>
</dbReference>
<dbReference type="GO" id="GO:0045148">
    <property type="term" value="F:tripeptide aminopeptidase activity"/>
    <property type="evidence" value="ECO:0000318"/>
    <property type="project" value="GO_Central"/>
</dbReference>
<dbReference type="GO" id="GO:0008270">
    <property type="term" value="F:zinc ion binding"/>
    <property type="evidence" value="ECO:0007669"/>
    <property type="project" value="UniProtKB-UniRule"/>
</dbReference>
<dbReference type="GO" id="GO:0043171">
    <property type="term" value="P:peptide catabolic process"/>
    <property type="evidence" value="ECO:0007669"/>
    <property type="project" value="UniProtKB-UniRule"/>
</dbReference>
<dbReference type="GO" id="GO:0006508">
    <property type="term" value="P:proteolysis"/>
    <property type="evidence" value="ECO:0007669"/>
    <property type="project" value="UniProtKB-UniRule"/>
</dbReference>
<dbReference type="CDD" id="cd03892">
    <property type="entry name" value="M20_peptT"/>
    <property type="match status" value="1"/>
</dbReference>
<dbReference type="FunFam" id="3.30.70.360:FF:000002">
    <property type="entry name" value="Peptidase T"/>
    <property type="match status" value="1"/>
</dbReference>
<dbReference type="Gene3D" id="3.30.70.360">
    <property type="match status" value="1"/>
</dbReference>
<dbReference type="Gene3D" id="3.40.630.10">
    <property type="entry name" value="Zn peptidases"/>
    <property type="match status" value="1"/>
</dbReference>
<dbReference type="HAMAP" id="MF_00550">
    <property type="entry name" value="Aminopeptidase_M20"/>
    <property type="match status" value="1"/>
</dbReference>
<dbReference type="InterPro" id="IPR001261">
    <property type="entry name" value="ArgE/DapE_CS"/>
</dbReference>
<dbReference type="InterPro" id="IPR036264">
    <property type="entry name" value="Bact_exopeptidase_dim_dom"/>
</dbReference>
<dbReference type="InterPro" id="IPR002933">
    <property type="entry name" value="Peptidase_M20"/>
</dbReference>
<dbReference type="InterPro" id="IPR011650">
    <property type="entry name" value="Peptidase_M20_dimer"/>
</dbReference>
<dbReference type="InterPro" id="IPR010161">
    <property type="entry name" value="Peptidase_M20B"/>
</dbReference>
<dbReference type="NCBIfam" id="TIGR01882">
    <property type="entry name" value="peptidase-T"/>
    <property type="match status" value="1"/>
</dbReference>
<dbReference type="NCBIfam" id="NF003976">
    <property type="entry name" value="PRK05469.1"/>
    <property type="match status" value="1"/>
</dbReference>
<dbReference type="NCBIfam" id="NF009920">
    <property type="entry name" value="PRK13381.1"/>
    <property type="match status" value="1"/>
</dbReference>
<dbReference type="PANTHER" id="PTHR42994">
    <property type="entry name" value="PEPTIDASE T"/>
    <property type="match status" value="1"/>
</dbReference>
<dbReference type="PANTHER" id="PTHR42994:SF1">
    <property type="entry name" value="PEPTIDASE T"/>
    <property type="match status" value="1"/>
</dbReference>
<dbReference type="Pfam" id="PF07687">
    <property type="entry name" value="M20_dimer"/>
    <property type="match status" value="1"/>
</dbReference>
<dbReference type="Pfam" id="PF01546">
    <property type="entry name" value="Peptidase_M20"/>
    <property type="match status" value="1"/>
</dbReference>
<dbReference type="PIRSF" id="PIRSF037215">
    <property type="entry name" value="Peptidase_M20B"/>
    <property type="match status" value="1"/>
</dbReference>
<dbReference type="SUPFAM" id="SSF55031">
    <property type="entry name" value="Bacterial exopeptidase dimerisation domain"/>
    <property type="match status" value="1"/>
</dbReference>
<dbReference type="SUPFAM" id="SSF53187">
    <property type="entry name" value="Zn-dependent exopeptidases"/>
    <property type="match status" value="1"/>
</dbReference>
<dbReference type="PROSITE" id="PS00758">
    <property type="entry name" value="ARGE_DAPE_CPG2_1"/>
    <property type="match status" value="1"/>
</dbReference>
<dbReference type="PROSITE" id="PS00759">
    <property type="entry name" value="ARGE_DAPE_CPG2_2"/>
    <property type="match status" value="1"/>
</dbReference>
<organism>
    <name type="scientific">Haemophilus influenzae (strain ATCC 51907 / DSM 11121 / KW20 / Rd)</name>
    <dbReference type="NCBI Taxonomy" id="71421"/>
    <lineage>
        <taxon>Bacteria</taxon>
        <taxon>Pseudomonadati</taxon>
        <taxon>Pseudomonadota</taxon>
        <taxon>Gammaproteobacteria</taxon>
        <taxon>Pasteurellales</taxon>
        <taxon>Pasteurellaceae</taxon>
        <taxon>Haemophilus</taxon>
    </lineage>
</organism>
<feature type="chain" id="PRO_0000185298" description="Peptidase T">
    <location>
        <begin position="1"/>
        <end position="412"/>
    </location>
</feature>
<feature type="active site" evidence="1">
    <location>
        <position position="86"/>
    </location>
</feature>
<feature type="active site" description="Proton acceptor" evidence="1">
    <location>
        <position position="179"/>
    </location>
</feature>
<feature type="binding site" evidence="1">
    <location>
        <position position="84"/>
    </location>
    <ligand>
        <name>Zn(2+)</name>
        <dbReference type="ChEBI" id="CHEBI:29105"/>
        <label>1</label>
    </ligand>
</feature>
<feature type="binding site" evidence="1">
    <location>
        <position position="146"/>
    </location>
    <ligand>
        <name>Zn(2+)</name>
        <dbReference type="ChEBI" id="CHEBI:29105"/>
        <label>1</label>
    </ligand>
</feature>
<feature type="binding site" evidence="1">
    <location>
        <position position="146"/>
    </location>
    <ligand>
        <name>Zn(2+)</name>
        <dbReference type="ChEBI" id="CHEBI:29105"/>
        <label>2</label>
    </ligand>
</feature>
<feature type="binding site" evidence="1">
    <location>
        <position position="180"/>
    </location>
    <ligand>
        <name>Zn(2+)</name>
        <dbReference type="ChEBI" id="CHEBI:29105"/>
        <label>2</label>
    </ligand>
</feature>
<feature type="binding site" evidence="1">
    <location>
        <position position="202"/>
    </location>
    <ligand>
        <name>Zn(2+)</name>
        <dbReference type="ChEBI" id="CHEBI:29105"/>
        <label>1</label>
    </ligand>
</feature>
<feature type="binding site" evidence="1">
    <location>
        <position position="385"/>
    </location>
    <ligand>
        <name>Zn(2+)</name>
        <dbReference type="ChEBI" id="CHEBI:29105"/>
        <label>2</label>
    </ligand>
</feature>
<name>PEPT_HAEIN</name>
<comment type="function">
    <text evidence="1">Cleaves the N-terminal amino acid of tripeptides.</text>
</comment>
<comment type="catalytic activity">
    <reaction evidence="1">
        <text>Release of the N-terminal residue from a tripeptide.</text>
        <dbReference type="EC" id="3.4.11.4"/>
    </reaction>
</comment>
<comment type="cofactor">
    <cofactor evidence="1">
        <name>Zn(2+)</name>
        <dbReference type="ChEBI" id="CHEBI:29105"/>
    </cofactor>
    <text evidence="1">Binds 2 Zn(2+) ions per subunit.</text>
</comment>
<comment type="subcellular location">
    <subcellularLocation>
        <location evidence="1">Cytoplasm</location>
    </subcellularLocation>
</comment>
<comment type="similarity">
    <text evidence="1">Belongs to the peptidase M20B family.</text>
</comment>
<protein>
    <recommendedName>
        <fullName evidence="1">Peptidase T</fullName>
        <ecNumber evidence="1">3.4.11.4</ecNumber>
    </recommendedName>
    <alternativeName>
        <fullName evidence="1">Aminotripeptidase</fullName>
        <shortName evidence="1">Tripeptidase</shortName>
    </alternativeName>
    <alternativeName>
        <fullName evidence="1">Tripeptide aminopeptidase</fullName>
    </alternativeName>
</protein>
<proteinExistence type="inferred from homology"/>
<gene>
    <name evidence="1" type="primary">pepT</name>
    <name type="ordered locus">HI_1348</name>
</gene>
<sequence length="412" mass="45986">MISQIDKTELLERFLHYVSFHTQSKPNAKHSPSSVGQMKLAMQLQKELIQLGLENVEVSKYAVVTAFLPANDPNLTKTIGLVAHLDTSPQCSGKNVRPEVIEEYRGGDIALGIGEEFISPVYYSFMQKLVGQTLIVTDGTTLLGADNKAGIAEIMTALSILQKENIPHCNIRVAFTPDEEIGLGIHYFPMEKFSCDWAYTIDGGEVGELEYENFNAATAKVRFFGRNIHTGYAKGKMLNALTLACEFQQVFPVDEVPEKTDGKVGFYHLEDFSGDIEQVELTYLIRDFDEQNFAQRKAFIKNQVEKFNAKKGLKKPIELEIQDSYQNMYDVVKNVPQSIELADRAMKAVGIKPNHKPIRGGTDGAFLASKGLACPNIFTGGYNFHSKHELVSLQGMENTVQVIIEMLKCKDL</sequence>
<accession>P45172</accession>
<reference key="1">
    <citation type="journal article" date="1995" name="Science">
        <title>Whole-genome random sequencing and assembly of Haemophilus influenzae Rd.</title>
        <authorList>
            <person name="Fleischmann R.D."/>
            <person name="Adams M.D."/>
            <person name="White O."/>
            <person name="Clayton R.A."/>
            <person name="Kirkness E.F."/>
            <person name="Kerlavage A.R."/>
            <person name="Bult C.J."/>
            <person name="Tomb J.-F."/>
            <person name="Dougherty B.A."/>
            <person name="Merrick J.M."/>
            <person name="McKenney K."/>
            <person name="Sutton G.G."/>
            <person name="FitzHugh W."/>
            <person name="Fields C.A."/>
            <person name="Gocayne J.D."/>
            <person name="Scott J.D."/>
            <person name="Shirley R."/>
            <person name="Liu L.-I."/>
            <person name="Glodek A."/>
            <person name="Kelley J.M."/>
            <person name="Weidman J.F."/>
            <person name="Phillips C.A."/>
            <person name="Spriggs T."/>
            <person name="Hedblom E."/>
            <person name="Cotton M.D."/>
            <person name="Utterback T.R."/>
            <person name="Hanna M.C."/>
            <person name="Nguyen D.T."/>
            <person name="Saudek D.M."/>
            <person name="Brandon R.C."/>
            <person name="Fine L.D."/>
            <person name="Fritchman J.L."/>
            <person name="Fuhrmann J.L."/>
            <person name="Geoghagen N.S.M."/>
            <person name="Gnehm C.L."/>
            <person name="McDonald L.A."/>
            <person name="Small K.V."/>
            <person name="Fraser C.M."/>
            <person name="Smith H.O."/>
            <person name="Venter J.C."/>
        </authorList>
    </citation>
    <scope>NUCLEOTIDE SEQUENCE [LARGE SCALE GENOMIC DNA]</scope>
    <source>
        <strain>ATCC 51907 / DSM 11121 / KW20 / Rd</strain>
    </source>
</reference>
<keyword id="KW-0031">Aminopeptidase</keyword>
<keyword id="KW-0963">Cytoplasm</keyword>
<keyword id="KW-0378">Hydrolase</keyword>
<keyword id="KW-0479">Metal-binding</keyword>
<keyword id="KW-0482">Metalloprotease</keyword>
<keyword id="KW-0645">Protease</keyword>
<keyword id="KW-1185">Reference proteome</keyword>
<keyword id="KW-0862">Zinc</keyword>